<reference key="1">
    <citation type="submission" date="2008-02" db="EMBL/GenBank/DDBJ databases">
        <title>Complete sequence of chromosome 1 of Burkholderia cenocepacia MC0-3.</title>
        <authorList>
            <person name="Copeland A."/>
            <person name="Lucas S."/>
            <person name="Lapidus A."/>
            <person name="Barry K."/>
            <person name="Bruce D."/>
            <person name="Goodwin L."/>
            <person name="Glavina del Rio T."/>
            <person name="Dalin E."/>
            <person name="Tice H."/>
            <person name="Pitluck S."/>
            <person name="Chain P."/>
            <person name="Malfatti S."/>
            <person name="Shin M."/>
            <person name="Vergez L."/>
            <person name="Schmutz J."/>
            <person name="Larimer F."/>
            <person name="Land M."/>
            <person name="Hauser L."/>
            <person name="Kyrpides N."/>
            <person name="Mikhailova N."/>
            <person name="Tiedje J."/>
            <person name="Richardson P."/>
        </authorList>
    </citation>
    <scope>NUCLEOTIDE SEQUENCE [LARGE SCALE GENOMIC DNA]</scope>
    <source>
        <strain>MC0-3</strain>
    </source>
</reference>
<proteinExistence type="inferred from homology"/>
<organism>
    <name type="scientific">Burkholderia orbicola (strain MC0-3)</name>
    <dbReference type="NCBI Taxonomy" id="406425"/>
    <lineage>
        <taxon>Bacteria</taxon>
        <taxon>Pseudomonadati</taxon>
        <taxon>Pseudomonadota</taxon>
        <taxon>Betaproteobacteria</taxon>
        <taxon>Burkholderiales</taxon>
        <taxon>Burkholderiaceae</taxon>
        <taxon>Burkholderia</taxon>
        <taxon>Burkholderia cepacia complex</taxon>
        <taxon>Burkholderia orbicola</taxon>
    </lineage>
</organism>
<evidence type="ECO:0000255" key="1">
    <source>
        <dbReference type="HAMAP-Rule" id="MF_00440"/>
    </source>
</evidence>
<accession>B1JWI0</accession>
<sequence>MRCPFCRHDDTQVVDSRVSEDGAAIRRRRRCSACDKRFTTYERVELNLPAVVKKDGSRTEFDRRKIVASMQLALRKRPVAADAIDAAVARIEYQLLATGEREVRSEKLGELVMNELRGLDTIAYVRFASVYRRFEDVSEFADVIEEFRRASPAKTPRKR</sequence>
<protein>
    <recommendedName>
        <fullName evidence="1">Transcriptional repressor NrdR</fullName>
    </recommendedName>
</protein>
<gene>
    <name evidence="1" type="primary">nrdR</name>
    <name type="ordered locus">Bcenmc03_0776</name>
</gene>
<name>NRDR_BURO0</name>
<comment type="function">
    <text evidence="1">Negatively regulates transcription of bacterial ribonucleotide reductase nrd genes and operons by binding to NrdR-boxes.</text>
</comment>
<comment type="cofactor">
    <cofactor evidence="1">
        <name>Zn(2+)</name>
        <dbReference type="ChEBI" id="CHEBI:29105"/>
    </cofactor>
    <text evidence="1">Binds 1 zinc ion.</text>
</comment>
<comment type="similarity">
    <text evidence="1">Belongs to the NrdR family.</text>
</comment>
<keyword id="KW-0067">ATP-binding</keyword>
<keyword id="KW-0238">DNA-binding</keyword>
<keyword id="KW-0479">Metal-binding</keyword>
<keyword id="KW-0547">Nucleotide-binding</keyword>
<keyword id="KW-0678">Repressor</keyword>
<keyword id="KW-0804">Transcription</keyword>
<keyword id="KW-0805">Transcription regulation</keyword>
<keyword id="KW-0862">Zinc</keyword>
<keyword id="KW-0863">Zinc-finger</keyword>
<feature type="chain" id="PRO_1000124474" description="Transcriptional repressor NrdR">
    <location>
        <begin position="1"/>
        <end position="159"/>
    </location>
</feature>
<feature type="domain" description="ATP-cone" evidence="1">
    <location>
        <begin position="49"/>
        <end position="139"/>
    </location>
</feature>
<feature type="zinc finger region" evidence="1">
    <location>
        <begin position="3"/>
        <end position="34"/>
    </location>
</feature>
<dbReference type="EMBL" id="CP000958">
    <property type="protein sequence ID" value="ACA89954.1"/>
    <property type="molecule type" value="Genomic_DNA"/>
</dbReference>
<dbReference type="RefSeq" id="WP_011694173.1">
    <property type="nucleotide sequence ID" value="NC_010508.1"/>
</dbReference>
<dbReference type="SMR" id="B1JWI0"/>
<dbReference type="GeneID" id="83047569"/>
<dbReference type="KEGG" id="bcm:Bcenmc03_0776"/>
<dbReference type="HOGENOM" id="CLU_108412_0_0_4"/>
<dbReference type="Proteomes" id="UP000002169">
    <property type="component" value="Chromosome 1"/>
</dbReference>
<dbReference type="GO" id="GO:0005524">
    <property type="term" value="F:ATP binding"/>
    <property type="evidence" value="ECO:0007669"/>
    <property type="project" value="UniProtKB-KW"/>
</dbReference>
<dbReference type="GO" id="GO:0003677">
    <property type="term" value="F:DNA binding"/>
    <property type="evidence" value="ECO:0007669"/>
    <property type="project" value="UniProtKB-KW"/>
</dbReference>
<dbReference type="GO" id="GO:0008270">
    <property type="term" value="F:zinc ion binding"/>
    <property type="evidence" value="ECO:0007669"/>
    <property type="project" value="UniProtKB-UniRule"/>
</dbReference>
<dbReference type="GO" id="GO:0045892">
    <property type="term" value="P:negative regulation of DNA-templated transcription"/>
    <property type="evidence" value="ECO:0007669"/>
    <property type="project" value="UniProtKB-UniRule"/>
</dbReference>
<dbReference type="HAMAP" id="MF_00440">
    <property type="entry name" value="NrdR"/>
    <property type="match status" value="1"/>
</dbReference>
<dbReference type="InterPro" id="IPR005144">
    <property type="entry name" value="ATP-cone_dom"/>
</dbReference>
<dbReference type="InterPro" id="IPR055173">
    <property type="entry name" value="NrdR-like_N"/>
</dbReference>
<dbReference type="InterPro" id="IPR003796">
    <property type="entry name" value="RNR_NrdR-like"/>
</dbReference>
<dbReference type="NCBIfam" id="TIGR00244">
    <property type="entry name" value="transcriptional regulator NrdR"/>
    <property type="match status" value="1"/>
</dbReference>
<dbReference type="PANTHER" id="PTHR30455">
    <property type="entry name" value="TRANSCRIPTIONAL REPRESSOR NRDR"/>
    <property type="match status" value="1"/>
</dbReference>
<dbReference type="PANTHER" id="PTHR30455:SF2">
    <property type="entry name" value="TRANSCRIPTIONAL REPRESSOR NRDR"/>
    <property type="match status" value="1"/>
</dbReference>
<dbReference type="Pfam" id="PF03477">
    <property type="entry name" value="ATP-cone"/>
    <property type="match status" value="1"/>
</dbReference>
<dbReference type="Pfam" id="PF22811">
    <property type="entry name" value="Zn_ribbon_NrdR"/>
    <property type="match status" value="1"/>
</dbReference>
<dbReference type="PROSITE" id="PS51161">
    <property type="entry name" value="ATP_CONE"/>
    <property type="match status" value="1"/>
</dbReference>